<dbReference type="EC" id="3.2.1.26"/>
<dbReference type="EMBL" id="X67744">
    <property type="protein sequence ID" value="CAA47970.1"/>
    <property type="molecule type" value="Genomic_DNA"/>
</dbReference>
<dbReference type="PIR" id="A47059">
    <property type="entry name" value="A47059"/>
</dbReference>
<dbReference type="RefSeq" id="WP_047172114.1">
    <property type="nucleotide sequence ID" value="NZ_CP171612.1"/>
</dbReference>
<dbReference type="SMR" id="Q05936"/>
<dbReference type="STRING" id="1288.AWC37_07650"/>
<dbReference type="CAZy" id="GH32">
    <property type="family name" value="Glycoside Hydrolase Family 32"/>
</dbReference>
<dbReference type="KEGG" id="sxo:SXYL_00887"/>
<dbReference type="eggNOG" id="COG1621">
    <property type="taxonomic scope" value="Bacteria"/>
</dbReference>
<dbReference type="BioCyc" id="MetaCyc:MONOMER-12602"/>
<dbReference type="UniPathway" id="UPA00238"/>
<dbReference type="GO" id="GO:0005737">
    <property type="term" value="C:cytoplasm"/>
    <property type="evidence" value="ECO:0007669"/>
    <property type="project" value="InterPro"/>
</dbReference>
<dbReference type="GO" id="GO:0004564">
    <property type="term" value="F:beta-fructofuranosidase activity"/>
    <property type="evidence" value="ECO:0007669"/>
    <property type="project" value="UniProtKB-EC"/>
</dbReference>
<dbReference type="GO" id="GO:0005985">
    <property type="term" value="P:sucrose metabolic process"/>
    <property type="evidence" value="ECO:0007669"/>
    <property type="project" value="UniProtKB-UniPathway"/>
</dbReference>
<dbReference type="CDD" id="cd18623">
    <property type="entry name" value="GH32_ScrB-like"/>
    <property type="match status" value="1"/>
</dbReference>
<dbReference type="Gene3D" id="2.60.120.560">
    <property type="entry name" value="Exo-inulinase, domain 1"/>
    <property type="match status" value="1"/>
</dbReference>
<dbReference type="Gene3D" id="2.115.10.20">
    <property type="entry name" value="Glycosyl hydrolase domain, family 43"/>
    <property type="match status" value="1"/>
</dbReference>
<dbReference type="InterPro" id="IPR013320">
    <property type="entry name" value="ConA-like_dom_sf"/>
</dbReference>
<dbReference type="InterPro" id="IPR051214">
    <property type="entry name" value="GH32_Enzymes"/>
</dbReference>
<dbReference type="InterPro" id="IPR001362">
    <property type="entry name" value="Glyco_hydro_32"/>
</dbReference>
<dbReference type="InterPro" id="IPR018053">
    <property type="entry name" value="Glyco_hydro_32_AS"/>
</dbReference>
<dbReference type="InterPro" id="IPR013189">
    <property type="entry name" value="Glyco_hydro_32_C"/>
</dbReference>
<dbReference type="InterPro" id="IPR013148">
    <property type="entry name" value="Glyco_hydro_32_N"/>
</dbReference>
<dbReference type="InterPro" id="IPR023296">
    <property type="entry name" value="Glyco_hydro_beta-prop_sf"/>
</dbReference>
<dbReference type="InterPro" id="IPR006232">
    <property type="entry name" value="Suc6P_hydrolase"/>
</dbReference>
<dbReference type="NCBIfam" id="TIGR01322">
    <property type="entry name" value="scrB_fam"/>
    <property type="match status" value="1"/>
</dbReference>
<dbReference type="PANTHER" id="PTHR43101">
    <property type="entry name" value="BETA-FRUCTOSIDASE"/>
    <property type="match status" value="1"/>
</dbReference>
<dbReference type="PANTHER" id="PTHR43101:SF1">
    <property type="entry name" value="BETA-FRUCTOSIDASE"/>
    <property type="match status" value="1"/>
</dbReference>
<dbReference type="Pfam" id="PF08244">
    <property type="entry name" value="Glyco_hydro_32C"/>
    <property type="match status" value="1"/>
</dbReference>
<dbReference type="Pfam" id="PF00251">
    <property type="entry name" value="Glyco_hydro_32N"/>
    <property type="match status" value="1"/>
</dbReference>
<dbReference type="SMART" id="SM00640">
    <property type="entry name" value="Glyco_32"/>
    <property type="match status" value="1"/>
</dbReference>
<dbReference type="SUPFAM" id="SSF75005">
    <property type="entry name" value="Arabinanase/levansucrase/invertase"/>
    <property type="match status" value="1"/>
</dbReference>
<dbReference type="SUPFAM" id="SSF49899">
    <property type="entry name" value="Concanavalin A-like lectins/glucanases"/>
    <property type="match status" value="1"/>
</dbReference>
<dbReference type="PROSITE" id="PS00609">
    <property type="entry name" value="GLYCOSYL_HYDROL_F32"/>
    <property type="match status" value="1"/>
</dbReference>
<organism>
    <name type="scientific">Staphylococcus xylosus</name>
    <dbReference type="NCBI Taxonomy" id="1288"/>
    <lineage>
        <taxon>Bacteria</taxon>
        <taxon>Bacillati</taxon>
        <taxon>Bacillota</taxon>
        <taxon>Bacilli</taxon>
        <taxon>Bacillales</taxon>
        <taxon>Staphylococcaceae</taxon>
        <taxon>Staphylococcus</taxon>
    </lineage>
</organism>
<gene>
    <name type="primary">scrB</name>
</gene>
<feature type="chain" id="PRO_0000169875" description="Sucrose-6-phosphate hydrolase">
    <location>
        <begin position="1"/>
        <end position="494"/>
    </location>
</feature>
<feature type="active site" evidence="2">
    <location>
        <position position="48"/>
    </location>
</feature>
<feature type="binding site" evidence="1">
    <location>
        <begin position="45"/>
        <end position="48"/>
    </location>
    <ligand>
        <name>substrate</name>
    </ligand>
</feature>
<feature type="binding site" evidence="1">
    <location>
        <position position="64"/>
    </location>
    <ligand>
        <name>substrate</name>
    </ligand>
</feature>
<feature type="binding site" evidence="1">
    <location>
        <begin position="107"/>
        <end position="108"/>
    </location>
    <ligand>
        <name>substrate</name>
    </ligand>
</feature>
<feature type="binding site" evidence="1">
    <location>
        <begin position="168"/>
        <end position="169"/>
    </location>
    <ligand>
        <name>substrate</name>
    </ligand>
</feature>
<feature type="binding site" evidence="1">
    <location>
        <position position="223"/>
    </location>
    <ligand>
        <name>substrate</name>
    </ligand>
</feature>
<accession>Q05936</accession>
<name>SCRB_STAXY</name>
<comment type="catalytic activity">
    <reaction evidence="2">
        <text>Hydrolysis of terminal non-reducing beta-D-fructofuranoside residues in beta-D-fructofuranosides.</text>
        <dbReference type="EC" id="3.2.1.26"/>
    </reaction>
</comment>
<comment type="pathway">
    <text>Glycan biosynthesis; sucrose metabolism.</text>
</comment>
<comment type="similarity">
    <text evidence="3">Belongs to the glycosyl hydrolase 32 family.</text>
</comment>
<evidence type="ECO:0000250" key="1"/>
<evidence type="ECO:0000255" key="2">
    <source>
        <dbReference type="PROSITE-ProRule" id="PRU10067"/>
    </source>
</evidence>
<evidence type="ECO:0000305" key="3"/>
<sequence>MSEWTKEQRYQKYEDVDQQTIEKLTEQVNQSEYRQTFHIQPQIGLLNDPNGLIYFKGNYYVSHQWFPLGPVHGLKYWYTYQSKDLVDFKAIGPTIKPDTKDDSHGVYSGSAFEYHDHLYYMYTANHRDSDWNRISTQHIAKMSKDGSINKFPKAVISAPPSGYTQHFRDPKVHVQDGVYYAMIAAQNIKKQGRILQYRSTDIVNWEFQGEVQTNLDDFGYMWECPDYFNLNGYDMLLFCPQGIDSEGERFKNIYQSGYIMGQYDINNLTMNHADFHELDYGFDFYAPQTFLDENGQRILIGWMGLPDINYPSDADGWAHCLTIPRVLTIESGNLKQRPIKALEKLRTNEETALGYANKFTRQLHPYEGKQFELIIDILENEATEVYFEVRTSKTESTLITYNKREQKLTLDRSESGQLPEPVEGTTRSTYLDTPLSKLQLFVDTSSVEIFCNDGERVMTARIFTDENATGIKTSTESGQTYLKFTKYDLKGDTI</sequence>
<reference key="1">
    <citation type="journal article" date="1993" name="J. Bacteriol.">
        <title>Characterization of a sucrase gene from Staphylococcus xylosus.</title>
        <authorList>
            <person name="Brueckner R."/>
            <person name="Wagner E."/>
            <person name="Goetz F."/>
        </authorList>
    </citation>
    <scope>NUCLEOTIDE SEQUENCE [GENOMIC DNA]</scope>
    <source>
        <strain>DSM 20267 / Isolate C2A</strain>
    </source>
</reference>
<keyword id="KW-0119">Carbohydrate metabolism</keyword>
<keyword id="KW-0326">Glycosidase</keyword>
<keyword id="KW-0378">Hydrolase</keyword>
<protein>
    <recommendedName>
        <fullName>Sucrose-6-phosphate hydrolase</fullName>
        <shortName>Sucrase</shortName>
        <ecNumber>3.2.1.26</ecNumber>
    </recommendedName>
    <alternativeName>
        <fullName>Invertase</fullName>
    </alternativeName>
</protein>
<proteinExistence type="inferred from homology"/>